<proteinExistence type="inferred from homology"/>
<comment type="function">
    <text evidence="1">Methylates ribosomal protein L11.</text>
</comment>
<comment type="catalytic activity">
    <reaction evidence="1">
        <text>L-lysyl-[protein] + 3 S-adenosyl-L-methionine = N(6),N(6),N(6)-trimethyl-L-lysyl-[protein] + 3 S-adenosyl-L-homocysteine + 3 H(+)</text>
        <dbReference type="Rhea" id="RHEA:54192"/>
        <dbReference type="Rhea" id="RHEA-COMP:9752"/>
        <dbReference type="Rhea" id="RHEA-COMP:13826"/>
        <dbReference type="ChEBI" id="CHEBI:15378"/>
        <dbReference type="ChEBI" id="CHEBI:29969"/>
        <dbReference type="ChEBI" id="CHEBI:57856"/>
        <dbReference type="ChEBI" id="CHEBI:59789"/>
        <dbReference type="ChEBI" id="CHEBI:61961"/>
    </reaction>
</comment>
<comment type="subcellular location">
    <subcellularLocation>
        <location evidence="1">Cytoplasm</location>
    </subcellularLocation>
</comment>
<comment type="similarity">
    <text evidence="1">Belongs to the methyltransferase superfamily. PrmA family.</text>
</comment>
<gene>
    <name evidence="1" type="primary">prmA</name>
    <name type="ordered locus">TTE0957</name>
</gene>
<protein>
    <recommendedName>
        <fullName evidence="1">Ribosomal protein L11 methyltransferase</fullName>
        <shortName evidence="1">L11 Mtase</shortName>
        <ecNumber evidence="1">2.1.1.-</ecNumber>
    </recommendedName>
</protein>
<sequence>MKWLEIQVTTSQEAEEAVTGILYDLGAGGVVIKNPNDVKELAQTSEWDYFDPSLLEEGEEVKISAYFLITTDITDKVNFLKERIWELKSFGINVGNVKVEVSEVDEEDWADSWKKYYKPLKVGKRIVVRPLWEEYSPKEGEIVIDLDPGMAFGTGTHETTKMCLQFLEDIVKPGAIVFDVGCGSGILSIAASKLGASYVYGADVDEMAVKIARENVKLNGLENVEIFQSDLLKNFRGKADVIVANIIADAIIRLIPDVLPHLKEEGLFLASGIIKDRFEEVKERAEEFFEIIDMKEEKEWLSILMKKKG</sequence>
<name>PRMA_CALS4</name>
<dbReference type="EC" id="2.1.1.-" evidence="1"/>
<dbReference type="EMBL" id="AE008691">
    <property type="protein sequence ID" value="AAM24213.1"/>
    <property type="molecule type" value="Genomic_DNA"/>
</dbReference>
<dbReference type="RefSeq" id="WP_011025332.1">
    <property type="nucleotide sequence ID" value="NC_003869.1"/>
</dbReference>
<dbReference type="SMR" id="Q8RB66"/>
<dbReference type="STRING" id="273068.TTE0957"/>
<dbReference type="KEGG" id="tte:TTE0957"/>
<dbReference type="eggNOG" id="COG2264">
    <property type="taxonomic scope" value="Bacteria"/>
</dbReference>
<dbReference type="HOGENOM" id="CLU_049382_0_1_9"/>
<dbReference type="OrthoDB" id="9785995at2"/>
<dbReference type="Proteomes" id="UP000000555">
    <property type="component" value="Chromosome"/>
</dbReference>
<dbReference type="GO" id="GO:0005737">
    <property type="term" value="C:cytoplasm"/>
    <property type="evidence" value="ECO:0007669"/>
    <property type="project" value="UniProtKB-SubCell"/>
</dbReference>
<dbReference type="GO" id="GO:0016279">
    <property type="term" value="F:protein-lysine N-methyltransferase activity"/>
    <property type="evidence" value="ECO:0007669"/>
    <property type="project" value="RHEA"/>
</dbReference>
<dbReference type="GO" id="GO:0032259">
    <property type="term" value="P:methylation"/>
    <property type="evidence" value="ECO:0007669"/>
    <property type="project" value="UniProtKB-KW"/>
</dbReference>
<dbReference type="CDD" id="cd02440">
    <property type="entry name" value="AdoMet_MTases"/>
    <property type="match status" value="1"/>
</dbReference>
<dbReference type="Gene3D" id="3.40.50.150">
    <property type="entry name" value="Vaccinia Virus protein VP39"/>
    <property type="match status" value="1"/>
</dbReference>
<dbReference type="HAMAP" id="MF_00735">
    <property type="entry name" value="Methyltr_PrmA"/>
    <property type="match status" value="1"/>
</dbReference>
<dbReference type="InterPro" id="IPR050078">
    <property type="entry name" value="Ribosomal_L11_MeTrfase_PrmA"/>
</dbReference>
<dbReference type="InterPro" id="IPR004498">
    <property type="entry name" value="Ribosomal_PrmA_MeTrfase"/>
</dbReference>
<dbReference type="InterPro" id="IPR029063">
    <property type="entry name" value="SAM-dependent_MTases_sf"/>
</dbReference>
<dbReference type="NCBIfam" id="TIGR00406">
    <property type="entry name" value="prmA"/>
    <property type="match status" value="1"/>
</dbReference>
<dbReference type="PANTHER" id="PTHR43648">
    <property type="entry name" value="ELECTRON TRANSFER FLAVOPROTEIN BETA SUBUNIT LYSINE METHYLTRANSFERASE"/>
    <property type="match status" value="1"/>
</dbReference>
<dbReference type="PANTHER" id="PTHR43648:SF1">
    <property type="entry name" value="ELECTRON TRANSFER FLAVOPROTEIN BETA SUBUNIT LYSINE METHYLTRANSFERASE"/>
    <property type="match status" value="1"/>
</dbReference>
<dbReference type="Pfam" id="PF06325">
    <property type="entry name" value="PrmA"/>
    <property type="match status" value="1"/>
</dbReference>
<dbReference type="PIRSF" id="PIRSF000401">
    <property type="entry name" value="RPL11_MTase"/>
    <property type="match status" value="1"/>
</dbReference>
<dbReference type="SUPFAM" id="SSF53335">
    <property type="entry name" value="S-adenosyl-L-methionine-dependent methyltransferases"/>
    <property type="match status" value="1"/>
</dbReference>
<feature type="chain" id="PRO_0000192329" description="Ribosomal protein L11 methyltransferase">
    <location>
        <begin position="1"/>
        <end position="309"/>
    </location>
</feature>
<feature type="binding site" evidence="1">
    <location>
        <position position="160"/>
    </location>
    <ligand>
        <name>S-adenosyl-L-methionine</name>
        <dbReference type="ChEBI" id="CHEBI:59789"/>
    </ligand>
</feature>
<feature type="binding site" evidence="1">
    <location>
        <position position="181"/>
    </location>
    <ligand>
        <name>S-adenosyl-L-methionine</name>
        <dbReference type="ChEBI" id="CHEBI:59789"/>
    </ligand>
</feature>
<feature type="binding site" evidence="1">
    <location>
        <position position="203"/>
    </location>
    <ligand>
        <name>S-adenosyl-L-methionine</name>
        <dbReference type="ChEBI" id="CHEBI:59789"/>
    </ligand>
</feature>
<feature type="binding site" evidence="1">
    <location>
        <position position="245"/>
    </location>
    <ligand>
        <name>S-adenosyl-L-methionine</name>
        <dbReference type="ChEBI" id="CHEBI:59789"/>
    </ligand>
</feature>
<reference key="1">
    <citation type="journal article" date="2002" name="Genome Res.">
        <title>A complete sequence of the T. tengcongensis genome.</title>
        <authorList>
            <person name="Bao Q."/>
            <person name="Tian Y."/>
            <person name="Li W."/>
            <person name="Xu Z."/>
            <person name="Xuan Z."/>
            <person name="Hu S."/>
            <person name="Dong W."/>
            <person name="Yang J."/>
            <person name="Chen Y."/>
            <person name="Xue Y."/>
            <person name="Xu Y."/>
            <person name="Lai X."/>
            <person name="Huang L."/>
            <person name="Dong X."/>
            <person name="Ma Y."/>
            <person name="Ling L."/>
            <person name="Tan H."/>
            <person name="Chen R."/>
            <person name="Wang J."/>
            <person name="Yu J."/>
            <person name="Yang H."/>
        </authorList>
    </citation>
    <scope>NUCLEOTIDE SEQUENCE [LARGE SCALE GENOMIC DNA]</scope>
    <source>
        <strain>DSM 15242 / JCM 11007 / NBRC 100824 / MB4</strain>
    </source>
</reference>
<evidence type="ECO:0000255" key="1">
    <source>
        <dbReference type="HAMAP-Rule" id="MF_00735"/>
    </source>
</evidence>
<organism>
    <name type="scientific">Caldanaerobacter subterraneus subsp. tengcongensis (strain DSM 15242 / JCM 11007 / NBRC 100824 / MB4)</name>
    <name type="common">Thermoanaerobacter tengcongensis</name>
    <dbReference type="NCBI Taxonomy" id="273068"/>
    <lineage>
        <taxon>Bacteria</taxon>
        <taxon>Bacillati</taxon>
        <taxon>Bacillota</taxon>
        <taxon>Clostridia</taxon>
        <taxon>Thermoanaerobacterales</taxon>
        <taxon>Thermoanaerobacteraceae</taxon>
        <taxon>Caldanaerobacter</taxon>
    </lineage>
</organism>
<accession>Q8RB66</accession>
<keyword id="KW-0963">Cytoplasm</keyword>
<keyword id="KW-0489">Methyltransferase</keyword>
<keyword id="KW-1185">Reference proteome</keyword>
<keyword id="KW-0949">S-adenosyl-L-methionine</keyword>
<keyword id="KW-0808">Transferase</keyword>